<feature type="chain" id="PRO_1000079306" description="UPF0145 protein YbjQ">
    <location>
        <begin position="1"/>
        <end position="107"/>
    </location>
</feature>
<evidence type="ECO:0000255" key="1">
    <source>
        <dbReference type="HAMAP-Rule" id="MF_00338"/>
    </source>
</evidence>
<protein>
    <recommendedName>
        <fullName evidence="1">UPF0145 protein YbjQ</fullName>
    </recommendedName>
</protein>
<sequence length="107" mass="11437">MQFSTTPTLEGQSIVEYCGVVTGEAILGANIFRDFFAGIRDIVGGRSGAYEKELRKAREIAFQELGEQAKALGADAVVGIDIDYETVGKDGSMLMVSVSGTAVKTRR</sequence>
<reference key="1">
    <citation type="submission" date="2007-11" db="EMBL/GenBank/DDBJ databases">
        <authorList>
            <consortium name="The Salmonella enterica serovar Paratyphi B Genome Sequencing Project"/>
            <person name="McClelland M."/>
            <person name="Sanderson E.K."/>
            <person name="Porwollik S."/>
            <person name="Spieth J."/>
            <person name="Clifton W.S."/>
            <person name="Fulton R."/>
            <person name="Cordes M."/>
            <person name="Wollam A."/>
            <person name="Shah N."/>
            <person name="Pepin K."/>
            <person name="Bhonagiri V."/>
            <person name="Nash W."/>
            <person name="Johnson M."/>
            <person name="Thiruvilangam P."/>
            <person name="Wilson R."/>
        </authorList>
    </citation>
    <scope>NUCLEOTIDE SEQUENCE [LARGE SCALE GENOMIC DNA]</scope>
    <source>
        <strain>ATCC BAA-1250 / SPB7</strain>
    </source>
</reference>
<proteinExistence type="inferred from homology"/>
<comment type="similarity">
    <text evidence="1">Belongs to the UPF0145 family.</text>
</comment>
<organism>
    <name type="scientific">Salmonella paratyphi B (strain ATCC BAA-1250 / SPB7)</name>
    <dbReference type="NCBI Taxonomy" id="1016998"/>
    <lineage>
        <taxon>Bacteria</taxon>
        <taxon>Pseudomonadati</taxon>
        <taxon>Pseudomonadota</taxon>
        <taxon>Gammaproteobacteria</taxon>
        <taxon>Enterobacterales</taxon>
        <taxon>Enterobacteriaceae</taxon>
        <taxon>Salmonella</taxon>
    </lineage>
</organism>
<dbReference type="EMBL" id="CP000886">
    <property type="protein sequence ID" value="ABX67974.1"/>
    <property type="molecule type" value="Genomic_DNA"/>
</dbReference>
<dbReference type="RefSeq" id="WP_001160725.1">
    <property type="nucleotide sequence ID" value="NC_010102.1"/>
</dbReference>
<dbReference type="SMR" id="A9N812"/>
<dbReference type="KEGG" id="spq:SPAB_02595"/>
<dbReference type="PATRIC" id="fig|1016998.12.peg.2454"/>
<dbReference type="HOGENOM" id="CLU_117144_3_0_6"/>
<dbReference type="BioCyc" id="SENT1016998:SPAB_RS10555-MONOMER"/>
<dbReference type="Proteomes" id="UP000008556">
    <property type="component" value="Chromosome"/>
</dbReference>
<dbReference type="Gene3D" id="3.30.110.70">
    <property type="entry name" value="Hypothetical protein apc22750. Chain B"/>
    <property type="match status" value="1"/>
</dbReference>
<dbReference type="HAMAP" id="MF_00338">
    <property type="entry name" value="UPF0145"/>
    <property type="match status" value="1"/>
</dbReference>
<dbReference type="InterPro" id="IPR035439">
    <property type="entry name" value="UPF0145_dom_sf"/>
</dbReference>
<dbReference type="InterPro" id="IPR002765">
    <property type="entry name" value="UPF0145_YbjQ-like"/>
</dbReference>
<dbReference type="NCBIfam" id="NF002776">
    <property type="entry name" value="PRK02877.1"/>
    <property type="match status" value="1"/>
</dbReference>
<dbReference type="PANTHER" id="PTHR34068">
    <property type="entry name" value="UPF0145 PROTEIN YBJQ"/>
    <property type="match status" value="1"/>
</dbReference>
<dbReference type="PANTHER" id="PTHR34068:SF1">
    <property type="entry name" value="UPF0145 PROTEIN YBJQ"/>
    <property type="match status" value="1"/>
</dbReference>
<dbReference type="Pfam" id="PF01906">
    <property type="entry name" value="YbjQ_1"/>
    <property type="match status" value="1"/>
</dbReference>
<dbReference type="SUPFAM" id="SSF117782">
    <property type="entry name" value="YbjQ-like"/>
    <property type="match status" value="1"/>
</dbReference>
<gene>
    <name evidence="1" type="primary">ybjQ</name>
    <name type="ordered locus">SPAB_02595</name>
</gene>
<accession>A9N812</accession>
<name>YBJQ_SALPB</name>